<accession>Q8CEK7</accession>
<accession>Q14BM4</accession>
<keyword id="KW-0053">Apoptosis</keyword>
<keyword id="KW-0256">Endoplasmic reticulum</keyword>
<keyword id="KW-0472">Membrane</keyword>
<keyword id="KW-0496">Mitochondrion</keyword>
<keyword id="KW-1000">Mitochondrion outer membrane</keyword>
<keyword id="KW-1185">Reference proteome</keyword>
<keyword id="KW-0812">Transmembrane</keyword>
<keyword id="KW-1133">Transmembrane helix</keyword>
<feature type="chain" id="PRO_0000087201" description="Fetal and adult testis-expressed transcript protein homolog">
    <location>
        <begin position="1"/>
        <end position="99"/>
    </location>
</feature>
<feature type="transmembrane region" description="Helical" evidence="2">
    <location>
        <begin position="79"/>
        <end position="98"/>
    </location>
</feature>
<gene>
    <name type="primary">Fate1</name>
    <name type="synonym">Fate</name>
</gene>
<reference key="1">
    <citation type="journal article" date="2005" name="Science">
        <title>The transcriptional landscape of the mammalian genome.</title>
        <authorList>
            <person name="Carninci P."/>
            <person name="Kasukawa T."/>
            <person name="Katayama S."/>
            <person name="Gough J."/>
            <person name="Frith M.C."/>
            <person name="Maeda N."/>
            <person name="Oyama R."/>
            <person name="Ravasi T."/>
            <person name="Lenhard B."/>
            <person name="Wells C."/>
            <person name="Kodzius R."/>
            <person name="Shimokawa K."/>
            <person name="Bajic V.B."/>
            <person name="Brenner S.E."/>
            <person name="Batalov S."/>
            <person name="Forrest A.R."/>
            <person name="Zavolan M."/>
            <person name="Davis M.J."/>
            <person name="Wilming L.G."/>
            <person name="Aidinis V."/>
            <person name="Allen J.E."/>
            <person name="Ambesi-Impiombato A."/>
            <person name="Apweiler R."/>
            <person name="Aturaliya R.N."/>
            <person name="Bailey T.L."/>
            <person name="Bansal M."/>
            <person name="Baxter L."/>
            <person name="Beisel K.W."/>
            <person name="Bersano T."/>
            <person name="Bono H."/>
            <person name="Chalk A.M."/>
            <person name="Chiu K.P."/>
            <person name="Choudhary V."/>
            <person name="Christoffels A."/>
            <person name="Clutterbuck D.R."/>
            <person name="Crowe M.L."/>
            <person name="Dalla E."/>
            <person name="Dalrymple B.P."/>
            <person name="de Bono B."/>
            <person name="Della Gatta G."/>
            <person name="di Bernardo D."/>
            <person name="Down T."/>
            <person name="Engstrom P."/>
            <person name="Fagiolini M."/>
            <person name="Faulkner G."/>
            <person name="Fletcher C.F."/>
            <person name="Fukushima T."/>
            <person name="Furuno M."/>
            <person name="Futaki S."/>
            <person name="Gariboldi M."/>
            <person name="Georgii-Hemming P."/>
            <person name="Gingeras T.R."/>
            <person name="Gojobori T."/>
            <person name="Green R.E."/>
            <person name="Gustincich S."/>
            <person name="Harbers M."/>
            <person name="Hayashi Y."/>
            <person name="Hensch T.K."/>
            <person name="Hirokawa N."/>
            <person name="Hill D."/>
            <person name="Huminiecki L."/>
            <person name="Iacono M."/>
            <person name="Ikeo K."/>
            <person name="Iwama A."/>
            <person name="Ishikawa T."/>
            <person name="Jakt M."/>
            <person name="Kanapin A."/>
            <person name="Katoh M."/>
            <person name="Kawasawa Y."/>
            <person name="Kelso J."/>
            <person name="Kitamura H."/>
            <person name="Kitano H."/>
            <person name="Kollias G."/>
            <person name="Krishnan S.P."/>
            <person name="Kruger A."/>
            <person name="Kummerfeld S.K."/>
            <person name="Kurochkin I.V."/>
            <person name="Lareau L.F."/>
            <person name="Lazarevic D."/>
            <person name="Lipovich L."/>
            <person name="Liu J."/>
            <person name="Liuni S."/>
            <person name="McWilliam S."/>
            <person name="Madan Babu M."/>
            <person name="Madera M."/>
            <person name="Marchionni L."/>
            <person name="Matsuda H."/>
            <person name="Matsuzawa S."/>
            <person name="Miki H."/>
            <person name="Mignone F."/>
            <person name="Miyake S."/>
            <person name="Morris K."/>
            <person name="Mottagui-Tabar S."/>
            <person name="Mulder N."/>
            <person name="Nakano N."/>
            <person name="Nakauchi H."/>
            <person name="Ng P."/>
            <person name="Nilsson R."/>
            <person name="Nishiguchi S."/>
            <person name="Nishikawa S."/>
            <person name="Nori F."/>
            <person name="Ohara O."/>
            <person name="Okazaki Y."/>
            <person name="Orlando V."/>
            <person name="Pang K.C."/>
            <person name="Pavan W.J."/>
            <person name="Pavesi G."/>
            <person name="Pesole G."/>
            <person name="Petrovsky N."/>
            <person name="Piazza S."/>
            <person name="Reed J."/>
            <person name="Reid J.F."/>
            <person name="Ring B.Z."/>
            <person name="Ringwald M."/>
            <person name="Rost B."/>
            <person name="Ruan Y."/>
            <person name="Salzberg S.L."/>
            <person name="Sandelin A."/>
            <person name="Schneider C."/>
            <person name="Schoenbach C."/>
            <person name="Sekiguchi K."/>
            <person name="Semple C.A."/>
            <person name="Seno S."/>
            <person name="Sessa L."/>
            <person name="Sheng Y."/>
            <person name="Shibata Y."/>
            <person name="Shimada H."/>
            <person name="Shimada K."/>
            <person name="Silva D."/>
            <person name="Sinclair B."/>
            <person name="Sperling S."/>
            <person name="Stupka E."/>
            <person name="Sugiura K."/>
            <person name="Sultana R."/>
            <person name="Takenaka Y."/>
            <person name="Taki K."/>
            <person name="Tammoja K."/>
            <person name="Tan S.L."/>
            <person name="Tang S."/>
            <person name="Taylor M.S."/>
            <person name="Tegner J."/>
            <person name="Teichmann S.A."/>
            <person name="Ueda H.R."/>
            <person name="van Nimwegen E."/>
            <person name="Verardo R."/>
            <person name="Wei C.L."/>
            <person name="Yagi K."/>
            <person name="Yamanishi H."/>
            <person name="Zabarovsky E."/>
            <person name="Zhu S."/>
            <person name="Zimmer A."/>
            <person name="Hide W."/>
            <person name="Bult C."/>
            <person name="Grimmond S.M."/>
            <person name="Teasdale R.D."/>
            <person name="Liu E.T."/>
            <person name="Brusic V."/>
            <person name="Quackenbush J."/>
            <person name="Wahlestedt C."/>
            <person name="Mattick J.S."/>
            <person name="Hume D.A."/>
            <person name="Kai C."/>
            <person name="Sasaki D."/>
            <person name="Tomaru Y."/>
            <person name="Fukuda S."/>
            <person name="Kanamori-Katayama M."/>
            <person name="Suzuki M."/>
            <person name="Aoki J."/>
            <person name="Arakawa T."/>
            <person name="Iida J."/>
            <person name="Imamura K."/>
            <person name="Itoh M."/>
            <person name="Kato T."/>
            <person name="Kawaji H."/>
            <person name="Kawagashira N."/>
            <person name="Kawashima T."/>
            <person name="Kojima M."/>
            <person name="Kondo S."/>
            <person name="Konno H."/>
            <person name="Nakano K."/>
            <person name="Ninomiya N."/>
            <person name="Nishio T."/>
            <person name="Okada M."/>
            <person name="Plessy C."/>
            <person name="Shibata K."/>
            <person name="Shiraki T."/>
            <person name="Suzuki S."/>
            <person name="Tagami M."/>
            <person name="Waki K."/>
            <person name="Watahiki A."/>
            <person name="Okamura-Oho Y."/>
            <person name="Suzuki H."/>
            <person name="Kawai J."/>
            <person name="Hayashizaki Y."/>
        </authorList>
    </citation>
    <scope>NUCLEOTIDE SEQUENCE [LARGE SCALE MRNA]</scope>
    <source>
        <strain>C57BL/6J</strain>
        <tissue>Epididymis</tissue>
    </source>
</reference>
<reference key="2">
    <citation type="journal article" date="2009" name="PLoS Biol.">
        <title>Lineage-specific biology revealed by a finished genome assembly of the mouse.</title>
        <authorList>
            <person name="Church D.M."/>
            <person name="Goodstadt L."/>
            <person name="Hillier L.W."/>
            <person name="Zody M.C."/>
            <person name="Goldstein S."/>
            <person name="She X."/>
            <person name="Bult C.J."/>
            <person name="Agarwala R."/>
            <person name="Cherry J.L."/>
            <person name="DiCuccio M."/>
            <person name="Hlavina W."/>
            <person name="Kapustin Y."/>
            <person name="Meric P."/>
            <person name="Maglott D."/>
            <person name="Birtle Z."/>
            <person name="Marques A.C."/>
            <person name="Graves T."/>
            <person name="Zhou S."/>
            <person name="Teague B."/>
            <person name="Potamousis K."/>
            <person name="Churas C."/>
            <person name="Place M."/>
            <person name="Herschleb J."/>
            <person name="Runnheim R."/>
            <person name="Forrest D."/>
            <person name="Amos-Landgraf J."/>
            <person name="Schwartz D.C."/>
            <person name="Cheng Z."/>
            <person name="Lindblad-Toh K."/>
            <person name="Eichler E.E."/>
            <person name="Ponting C.P."/>
        </authorList>
    </citation>
    <scope>NUCLEOTIDE SEQUENCE [LARGE SCALE GENOMIC DNA]</scope>
    <source>
        <strain>C57BL/6J</strain>
    </source>
</reference>
<reference key="3">
    <citation type="journal article" date="2004" name="Genome Res.">
        <title>The status, quality, and expansion of the NIH full-length cDNA project: the Mammalian Gene Collection (MGC).</title>
        <authorList>
            <consortium name="The MGC Project Team"/>
        </authorList>
    </citation>
    <scope>NUCLEOTIDE SEQUENCE [LARGE SCALE MRNA]</scope>
</reference>
<evidence type="ECO:0000250" key="1">
    <source>
        <dbReference type="UniProtKB" id="Q969F0"/>
    </source>
</evidence>
<evidence type="ECO:0000255" key="2"/>
<evidence type="ECO:0000305" key="3"/>
<sequence>MPWVPREHSHDDVQLQEFSRNFPVGRFPYECLEADIMAKIGLEELNGLEMEVMRRQMQMTSGRLHILEDQDATWCHKEAALFTLLVSVCIANLWLWVHW</sequence>
<name>FATE1_MOUSE</name>
<proteinExistence type="inferred from homology"/>
<organism>
    <name type="scientific">Mus musculus</name>
    <name type="common">Mouse</name>
    <dbReference type="NCBI Taxonomy" id="10090"/>
    <lineage>
        <taxon>Eukaryota</taxon>
        <taxon>Metazoa</taxon>
        <taxon>Chordata</taxon>
        <taxon>Craniata</taxon>
        <taxon>Vertebrata</taxon>
        <taxon>Euteleostomi</taxon>
        <taxon>Mammalia</taxon>
        <taxon>Eutheria</taxon>
        <taxon>Euarchontoglires</taxon>
        <taxon>Glires</taxon>
        <taxon>Rodentia</taxon>
        <taxon>Myomorpha</taxon>
        <taxon>Muroidea</taxon>
        <taxon>Muridae</taxon>
        <taxon>Murinae</taxon>
        <taxon>Mus</taxon>
        <taxon>Mus</taxon>
    </lineage>
</organism>
<dbReference type="EMBL" id="AK020359">
    <property type="protein sequence ID" value="BAC25625.1"/>
    <property type="molecule type" value="mRNA"/>
</dbReference>
<dbReference type="EMBL" id="AL731693">
    <property type="protein sequence ID" value="CAM46056.1"/>
    <property type="molecule type" value="Genomic_DNA"/>
</dbReference>
<dbReference type="EMBL" id="BC115733">
    <property type="status" value="NOT_ANNOTATED_CDS"/>
    <property type="molecule type" value="mRNA"/>
</dbReference>
<dbReference type="SMR" id="Q8CEK7"/>
<dbReference type="FunCoup" id="Q8CEK7">
    <property type="interactions" value="44"/>
</dbReference>
<dbReference type="STRING" id="10090.ENSMUSP00000065715"/>
<dbReference type="PaxDb" id="10090-ENSMUSP00000065715"/>
<dbReference type="Antibodypedia" id="30697">
    <property type="antibodies" value="315 antibodies from 21 providers"/>
</dbReference>
<dbReference type="Ensembl" id="ENSMUST00000066116.8">
    <property type="protein sequence ID" value="ENSMUSP00000065715.2"/>
    <property type="gene ID" value="ENSMUSG00000053593.11"/>
</dbReference>
<dbReference type="Ensembl" id="ENSMUST00000114569.2">
    <property type="protein sequence ID" value="ENSMUSP00000110216.2"/>
    <property type="gene ID" value="ENSMUSG00000053593.11"/>
</dbReference>
<dbReference type="UCSC" id="uc009tkj.2">
    <property type="organism name" value="mouse"/>
</dbReference>
<dbReference type="AGR" id="MGI:1925155"/>
<dbReference type="MGI" id="MGI:1925155">
    <property type="gene designation" value="Fate1"/>
</dbReference>
<dbReference type="VEuPathDB" id="HostDB:ENSMUSG00000053593"/>
<dbReference type="eggNOG" id="ENOG502SRT6">
    <property type="taxonomic scope" value="Eukaryota"/>
</dbReference>
<dbReference type="GeneTree" id="ENSGT00390000006832"/>
<dbReference type="HOGENOM" id="CLU_2319587_0_0_1"/>
<dbReference type="InParanoid" id="Q8CEK7"/>
<dbReference type="OMA" id="DQDATWR"/>
<dbReference type="OrthoDB" id="5986838at2759"/>
<dbReference type="PhylomeDB" id="Q8CEK7"/>
<dbReference type="TreeFam" id="TF338514"/>
<dbReference type="PRO" id="PR:Q8CEK7"/>
<dbReference type="Proteomes" id="UP000000589">
    <property type="component" value="Chromosome X"/>
</dbReference>
<dbReference type="RNAct" id="Q8CEK7">
    <property type="molecule type" value="protein"/>
</dbReference>
<dbReference type="Bgee" id="ENSMUSG00000053593">
    <property type="expression patterns" value="Expressed in secondary oocyte and 4 other cell types or tissues"/>
</dbReference>
<dbReference type="GO" id="GO:0005789">
    <property type="term" value="C:endoplasmic reticulum membrane"/>
    <property type="evidence" value="ECO:0007669"/>
    <property type="project" value="UniProtKB-SubCell"/>
</dbReference>
<dbReference type="GO" id="GO:0005741">
    <property type="term" value="C:mitochondrial outer membrane"/>
    <property type="evidence" value="ECO:0007669"/>
    <property type="project" value="UniProtKB-SubCell"/>
</dbReference>
<dbReference type="GO" id="GO:0006915">
    <property type="term" value="P:apoptotic process"/>
    <property type="evidence" value="ECO:0007669"/>
    <property type="project" value="UniProtKB-KW"/>
</dbReference>
<dbReference type="GO" id="GO:0042981">
    <property type="term" value="P:regulation of apoptotic process"/>
    <property type="evidence" value="ECO:0007669"/>
    <property type="project" value="InterPro"/>
</dbReference>
<dbReference type="InterPro" id="IPR039153">
    <property type="entry name" value="FATE1"/>
</dbReference>
<dbReference type="PANTHER" id="PTHR21128">
    <property type="entry name" value="FETAL AND ADULT TESTIS-EXPRESSED TRANSCRIPT PROTEIN"/>
    <property type="match status" value="1"/>
</dbReference>
<dbReference type="PANTHER" id="PTHR21128:SF0">
    <property type="entry name" value="FETAL AND ADULT TESTIS-EXPRESSED TRANSCRIPT PROTEIN"/>
    <property type="match status" value="1"/>
</dbReference>
<comment type="function">
    <text evidence="1">Involved in the regulation of endoplasmic reticulum (ER)-mitochondria coupling. Negatively regulates the ER-mitochondria distance and Ca(2+) transfer from ER to mitochondria possibly implicating it in the regulation of apoptosis. May collaborate with RNF183 to restrain BIK protein levels thus regulating apoptotic signaling.</text>
</comment>
<comment type="subunit">
    <text evidence="1">Interacts with BIK and RNF183. Interacts with IMMT/MIC60and EMD.</text>
</comment>
<comment type="subcellular location">
    <subcellularLocation>
        <location evidence="1">Mitochondrion</location>
    </subcellularLocation>
    <subcellularLocation>
        <location evidence="1">Mitochondrion outer membrane</location>
    </subcellularLocation>
    <subcellularLocation>
        <location evidence="1">Endoplasmic reticulum membrane</location>
        <topology evidence="3">Single-pass membrane protein</topology>
        <orientation evidence="1">Cytoplasmic side</orientation>
    </subcellularLocation>
    <text evidence="1">Localized to specific membrane structures termed mitochondria-associated membranes (MAMs) which connect the endoplasmic reticulum (ER) and the mitochondria. Also associated with the outer surface of mitochondria at sites that are not in close contact with the ER.</text>
</comment>
<comment type="caution">
    <text evidence="3">The human, porcine and bovine orthologs have a longer N-terminal part.</text>
</comment>
<protein>
    <recommendedName>
        <fullName>Fetal and adult testis-expressed transcript protein homolog</fullName>
    </recommendedName>
</protein>